<gene>
    <name evidence="1" type="primary">rpoC</name>
    <name type="ordered locus">NGK_2421</name>
</gene>
<dbReference type="EC" id="2.7.7.6" evidence="1"/>
<dbReference type="EMBL" id="CP001050">
    <property type="protein sequence ID" value="ACF31023.1"/>
    <property type="molecule type" value="Genomic_DNA"/>
</dbReference>
<dbReference type="RefSeq" id="WP_003690305.1">
    <property type="nucleotide sequence ID" value="NC_011035.1"/>
</dbReference>
<dbReference type="SMR" id="B4RQW3"/>
<dbReference type="GeneID" id="66754282"/>
<dbReference type="KEGG" id="ngk:NGK_2421"/>
<dbReference type="HOGENOM" id="CLU_000524_3_1_4"/>
<dbReference type="Proteomes" id="UP000002564">
    <property type="component" value="Chromosome"/>
</dbReference>
<dbReference type="GO" id="GO:0000428">
    <property type="term" value="C:DNA-directed RNA polymerase complex"/>
    <property type="evidence" value="ECO:0007669"/>
    <property type="project" value="UniProtKB-KW"/>
</dbReference>
<dbReference type="GO" id="GO:0003677">
    <property type="term" value="F:DNA binding"/>
    <property type="evidence" value="ECO:0007669"/>
    <property type="project" value="UniProtKB-UniRule"/>
</dbReference>
<dbReference type="GO" id="GO:0003899">
    <property type="term" value="F:DNA-directed RNA polymerase activity"/>
    <property type="evidence" value="ECO:0007669"/>
    <property type="project" value="UniProtKB-UniRule"/>
</dbReference>
<dbReference type="GO" id="GO:0000287">
    <property type="term" value="F:magnesium ion binding"/>
    <property type="evidence" value="ECO:0007669"/>
    <property type="project" value="UniProtKB-UniRule"/>
</dbReference>
<dbReference type="GO" id="GO:0008270">
    <property type="term" value="F:zinc ion binding"/>
    <property type="evidence" value="ECO:0007669"/>
    <property type="project" value="UniProtKB-UniRule"/>
</dbReference>
<dbReference type="GO" id="GO:0006351">
    <property type="term" value="P:DNA-templated transcription"/>
    <property type="evidence" value="ECO:0007669"/>
    <property type="project" value="UniProtKB-UniRule"/>
</dbReference>
<dbReference type="CDD" id="cd02655">
    <property type="entry name" value="RNAP_beta'_C"/>
    <property type="match status" value="1"/>
</dbReference>
<dbReference type="CDD" id="cd01609">
    <property type="entry name" value="RNAP_beta'_N"/>
    <property type="match status" value="1"/>
</dbReference>
<dbReference type="FunFam" id="1.10.132.30:FF:000003">
    <property type="entry name" value="DNA-directed RNA polymerase subunit beta"/>
    <property type="match status" value="1"/>
</dbReference>
<dbReference type="FunFam" id="1.10.150.390:FF:000002">
    <property type="entry name" value="DNA-directed RNA polymerase subunit beta"/>
    <property type="match status" value="1"/>
</dbReference>
<dbReference type="FunFam" id="4.10.860.120:FF:000001">
    <property type="entry name" value="DNA-directed RNA polymerase subunit beta"/>
    <property type="match status" value="1"/>
</dbReference>
<dbReference type="Gene3D" id="1.10.132.30">
    <property type="match status" value="1"/>
</dbReference>
<dbReference type="Gene3D" id="1.10.150.390">
    <property type="match status" value="1"/>
</dbReference>
<dbReference type="Gene3D" id="1.10.1790.20">
    <property type="match status" value="1"/>
</dbReference>
<dbReference type="Gene3D" id="1.10.40.90">
    <property type="match status" value="1"/>
</dbReference>
<dbReference type="Gene3D" id="2.40.40.20">
    <property type="match status" value="1"/>
</dbReference>
<dbReference type="Gene3D" id="2.40.50.100">
    <property type="match status" value="3"/>
</dbReference>
<dbReference type="Gene3D" id="4.10.860.120">
    <property type="entry name" value="RNA polymerase II, clamp domain"/>
    <property type="match status" value="1"/>
</dbReference>
<dbReference type="Gene3D" id="1.10.274.100">
    <property type="entry name" value="RNA polymerase Rpb1, domain 3"/>
    <property type="match status" value="1"/>
</dbReference>
<dbReference type="HAMAP" id="MF_01322">
    <property type="entry name" value="RNApol_bact_RpoC"/>
    <property type="match status" value="1"/>
</dbReference>
<dbReference type="InterPro" id="IPR045867">
    <property type="entry name" value="DNA-dir_RpoC_beta_prime"/>
</dbReference>
<dbReference type="InterPro" id="IPR012754">
    <property type="entry name" value="DNA-dir_RpoC_beta_prime_bact"/>
</dbReference>
<dbReference type="InterPro" id="IPR000722">
    <property type="entry name" value="RNA_pol_asu"/>
</dbReference>
<dbReference type="InterPro" id="IPR006592">
    <property type="entry name" value="RNA_pol_N"/>
</dbReference>
<dbReference type="InterPro" id="IPR007080">
    <property type="entry name" value="RNA_pol_Rpb1_1"/>
</dbReference>
<dbReference type="InterPro" id="IPR007066">
    <property type="entry name" value="RNA_pol_Rpb1_3"/>
</dbReference>
<dbReference type="InterPro" id="IPR042102">
    <property type="entry name" value="RNA_pol_Rpb1_3_sf"/>
</dbReference>
<dbReference type="InterPro" id="IPR007083">
    <property type="entry name" value="RNA_pol_Rpb1_4"/>
</dbReference>
<dbReference type="InterPro" id="IPR007081">
    <property type="entry name" value="RNA_pol_Rpb1_5"/>
</dbReference>
<dbReference type="InterPro" id="IPR044893">
    <property type="entry name" value="RNA_pol_Rpb1_clamp_domain"/>
</dbReference>
<dbReference type="InterPro" id="IPR038120">
    <property type="entry name" value="Rpb1_funnel_sf"/>
</dbReference>
<dbReference type="NCBIfam" id="TIGR02386">
    <property type="entry name" value="rpoC_TIGR"/>
    <property type="match status" value="1"/>
</dbReference>
<dbReference type="PANTHER" id="PTHR19376">
    <property type="entry name" value="DNA-DIRECTED RNA POLYMERASE"/>
    <property type="match status" value="1"/>
</dbReference>
<dbReference type="PANTHER" id="PTHR19376:SF54">
    <property type="entry name" value="DNA-DIRECTED RNA POLYMERASE SUBUNIT BETA"/>
    <property type="match status" value="1"/>
</dbReference>
<dbReference type="Pfam" id="PF04997">
    <property type="entry name" value="RNA_pol_Rpb1_1"/>
    <property type="match status" value="1"/>
</dbReference>
<dbReference type="Pfam" id="PF00623">
    <property type="entry name" value="RNA_pol_Rpb1_2"/>
    <property type="match status" value="2"/>
</dbReference>
<dbReference type="Pfam" id="PF04983">
    <property type="entry name" value="RNA_pol_Rpb1_3"/>
    <property type="match status" value="1"/>
</dbReference>
<dbReference type="Pfam" id="PF05000">
    <property type="entry name" value="RNA_pol_Rpb1_4"/>
    <property type="match status" value="1"/>
</dbReference>
<dbReference type="Pfam" id="PF04998">
    <property type="entry name" value="RNA_pol_Rpb1_5"/>
    <property type="match status" value="1"/>
</dbReference>
<dbReference type="SMART" id="SM00663">
    <property type="entry name" value="RPOLA_N"/>
    <property type="match status" value="1"/>
</dbReference>
<dbReference type="SUPFAM" id="SSF64484">
    <property type="entry name" value="beta and beta-prime subunits of DNA dependent RNA-polymerase"/>
    <property type="match status" value="1"/>
</dbReference>
<keyword id="KW-0240">DNA-directed RNA polymerase</keyword>
<keyword id="KW-0460">Magnesium</keyword>
<keyword id="KW-0479">Metal-binding</keyword>
<keyword id="KW-0548">Nucleotidyltransferase</keyword>
<keyword id="KW-0804">Transcription</keyword>
<keyword id="KW-0808">Transferase</keyword>
<keyword id="KW-0862">Zinc</keyword>
<name>RPOC_NEIG2</name>
<comment type="function">
    <text evidence="1">DNA-dependent RNA polymerase catalyzes the transcription of DNA into RNA using the four ribonucleoside triphosphates as substrates.</text>
</comment>
<comment type="catalytic activity">
    <reaction evidence="1">
        <text>RNA(n) + a ribonucleoside 5'-triphosphate = RNA(n+1) + diphosphate</text>
        <dbReference type="Rhea" id="RHEA:21248"/>
        <dbReference type="Rhea" id="RHEA-COMP:14527"/>
        <dbReference type="Rhea" id="RHEA-COMP:17342"/>
        <dbReference type="ChEBI" id="CHEBI:33019"/>
        <dbReference type="ChEBI" id="CHEBI:61557"/>
        <dbReference type="ChEBI" id="CHEBI:140395"/>
        <dbReference type="EC" id="2.7.7.6"/>
    </reaction>
</comment>
<comment type="cofactor">
    <cofactor evidence="1">
        <name>Mg(2+)</name>
        <dbReference type="ChEBI" id="CHEBI:18420"/>
    </cofactor>
    <text evidence="1">Binds 1 Mg(2+) ion per subunit.</text>
</comment>
<comment type="cofactor">
    <cofactor evidence="1">
        <name>Zn(2+)</name>
        <dbReference type="ChEBI" id="CHEBI:29105"/>
    </cofactor>
    <text evidence="1">Binds 2 Zn(2+) ions per subunit.</text>
</comment>
<comment type="subunit">
    <text evidence="1">The RNAP catalytic core consists of 2 alpha, 1 beta, 1 beta' and 1 omega subunit. When a sigma factor is associated with the core the holoenzyme is formed, which can initiate transcription.</text>
</comment>
<comment type="similarity">
    <text evidence="1">Belongs to the RNA polymerase beta' chain family.</text>
</comment>
<organism>
    <name type="scientific">Neisseria gonorrhoeae (strain NCCP11945)</name>
    <dbReference type="NCBI Taxonomy" id="521006"/>
    <lineage>
        <taxon>Bacteria</taxon>
        <taxon>Pseudomonadati</taxon>
        <taxon>Pseudomonadota</taxon>
        <taxon>Betaproteobacteria</taxon>
        <taxon>Neisseriales</taxon>
        <taxon>Neisseriaceae</taxon>
        <taxon>Neisseria</taxon>
    </lineage>
</organism>
<proteinExistence type="inferred from homology"/>
<sequence>MNLLNLFNPLQTAGMEEEFDAIKIGIASPETIRSWSYGEVKKPETINYRTFKPERDGLFCAKIFGPVKDYECLCGKYKRLKFKGVTCEKCGVEVTLSKVRRERMGHIELAAPVAHIWFLKSLPSRLGMVLNMTLRDIERVLYFEAFVVTDPGMTPLQRRQLLTEDDYYNKLDEYGDDFDAKMGAEGIRELLRTLDVAGEIEILRQELESTGSDTKIKKIAKRLKVLEAFHRSGMKLEWMIMDVLPVLPPDLRPLVPLDGGRFATSDLNDLYRRVINRNNRLKRLLELHAPDIIVRNEKRMLQEAVDSLLDNGRRGKAMTGANKRPLKSLADMIKGKGGRFRQNLLGKRVDYSGRSVITVGPYLRLHQCGLPKKMALELFKPFIFHKLEKQGLASTVKAAKKLVEQEVPEVWDILEEVIREHPIMLNRAPTLHRLGIQAFEPILIEGKAIQLHPLVCAAFNADFDGDQMAVHVPLSLEAQMEARTLMLASNNVLSPANGEPIIVPSQDIVLGLYYMTRDRINAKGEGSLFADVKEVHRAYHTKQVELGTKITVRLREWVKNEAGEFEPVVNRYETTVGRALLSEILPKGLPFEYVNKALKKKEISKLINASFRLCGLRDTVIFADHLMYTGFGFAAKGGISIAVDDMEIPKEKAALLAEANAEVKEIEDQYRQGLVTNGERYNKVVDIWGRAGDKIAKAMMDNLSKQKVIDRDGNEVDQESFNSIYMMADSGARGSAAQIKQLSGMRGLMAKPDGSIIETPITSNFREGLTVLQYFIATHGARKGLADTALKTANSGYLTRRLVDVTQDLVVVEDDCGTSDGFVMKAVVQGGDVIEALRDRILGRVTASDVVDPSSGETLVEAGTLLTEKLVDMIDQSGVDEVKVRTPITCKTRHGLCAHCYGRDLARGKLVNAGEAVGVIAAQSIGEPGTQLTMRTFHIGGAASRAAAASQVEAKSNGTARFSSQMRYVANNKGELVVIGRSCEVVIHDDIGRERERHKVPYGAILLVQDGMAIKAGQTLATWDPHTRPMITEHAGMVKFENMEEGVTVAKQTDDVTGLSALVVIDGKRRSSSASKLLRPTVKLLDENGVEICIPGTSTPVSMAFPVGAVITVREGQEIGKGDVLARIPQASSKTRDITGGLPRVAELFEARVPKDAGMLAEITGTVSFGKETKGKQRLIITDVDGVAYETLISKEKQILVHDGQVVNRGETIVDGAVDPHDILRLQGIEALARYIVQEVQEVYRLQGVKISDKHIEVIIRQMLRRVNIADAGETGFITGEQVERGDMMAANEKALEEGKEPARYENILLGITKASLSTDSFISAASFQETTRVLTEAAIMGKQDELRGLKENVIVGRLIPAGTGLTYHRSRHQQWQGVEQETAETQVTDE</sequence>
<protein>
    <recommendedName>
        <fullName evidence="1">DNA-directed RNA polymerase subunit beta'</fullName>
        <shortName evidence="1">RNAP subunit beta'</shortName>
        <ecNumber evidence="1">2.7.7.6</ecNumber>
    </recommendedName>
    <alternativeName>
        <fullName evidence="1">RNA polymerase subunit beta'</fullName>
    </alternativeName>
    <alternativeName>
        <fullName evidence="1">Transcriptase subunit beta'</fullName>
    </alternativeName>
</protein>
<reference key="1">
    <citation type="journal article" date="2008" name="J. Bacteriol.">
        <title>Complete genome sequence of Neisseria gonorrhoeae NCCP11945.</title>
        <authorList>
            <person name="Chung G.T."/>
            <person name="Yoo J.S."/>
            <person name="Oh H.B."/>
            <person name="Lee Y.S."/>
            <person name="Cha S.H."/>
            <person name="Kim S.J."/>
            <person name="Yoo C.K."/>
        </authorList>
    </citation>
    <scope>NUCLEOTIDE SEQUENCE [LARGE SCALE GENOMIC DNA]</scope>
    <source>
        <strain>NCCP11945</strain>
    </source>
</reference>
<feature type="chain" id="PRO_1000141786" description="DNA-directed RNA polymerase subunit beta'">
    <location>
        <begin position="1"/>
        <end position="1391"/>
    </location>
</feature>
<feature type="binding site" evidence="1">
    <location>
        <position position="72"/>
    </location>
    <ligand>
        <name>Zn(2+)</name>
        <dbReference type="ChEBI" id="CHEBI:29105"/>
        <label>1</label>
    </ligand>
</feature>
<feature type="binding site" evidence="1">
    <location>
        <position position="74"/>
    </location>
    <ligand>
        <name>Zn(2+)</name>
        <dbReference type="ChEBI" id="CHEBI:29105"/>
        <label>1</label>
    </ligand>
</feature>
<feature type="binding site" evidence="1">
    <location>
        <position position="87"/>
    </location>
    <ligand>
        <name>Zn(2+)</name>
        <dbReference type="ChEBI" id="CHEBI:29105"/>
        <label>1</label>
    </ligand>
</feature>
<feature type="binding site" evidence="1">
    <location>
        <position position="90"/>
    </location>
    <ligand>
        <name>Zn(2+)</name>
        <dbReference type="ChEBI" id="CHEBI:29105"/>
        <label>1</label>
    </ligand>
</feature>
<feature type="binding site" evidence="1">
    <location>
        <position position="462"/>
    </location>
    <ligand>
        <name>Mg(2+)</name>
        <dbReference type="ChEBI" id="CHEBI:18420"/>
    </ligand>
</feature>
<feature type="binding site" evidence="1">
    <location>
        <position position="464"/>
    </location>
    <ligand>
        <name>Mg(2+)</name>
        <dbReference type="ChEBI" id="CHEBI:18420"/>
    </ligand>
</feature>
<feature type="binding site" evidence="1">
    <location>
        <position position="466"/>
    </location>
    <ligand>
        <name>Mg(2+)</name>
        <dbReference type="ChEBI" id="CHEBI:18420"/>
    </ligand>
</feature>
<feature type="binding site" evidence="1">
    <location>
        <position position="816"/>
    </location>
    <ligand>
        <name>Zn(2+)</name>
        <dbReference type="ChEBI" id="CHEBI:29105"/>
        <label>2</label>
    </ligand>
</feature>
<feature type="binding site" evidence="1">
    <location>
        <position position="890"/>
    </location>
    <ligand>
        <name>Zn(2+)</name>
        <dbReference type="ChEBI" id="CHEBI:29105"/>
        <label>2</label>
    </ligand>
</feature>
<feature type="binding site" evidence="1">
    <location>
        <position position="897"/>
    </location>
    <ligand>
        <name>Zn(2+)</name>
        <dbReference type="ChEBI" id="CHEBI:29105"/>
        <label>2</label>
    </ligand>
</feature>
<feature type="binding site" evidence="1">
    <location>
        <position position="900"/>
    </location>
    <ligand>
        <name>Zn(2+)</name>
        <dbReference type="ChEBI" id="CHEBI:29105"/>
        <label>2</label>
    </ligand>
</feature>
<accession>B4RQW3</accession>
<evidence type="ECO:0000255" key="1">
    <source>
        <dbReference type="HAMAP-Rule" id="MF_01322"/>
    </source>
</evidence>